<comment type="disruption phenotype">
    <text evidence="1">Non-essential, it can be disrupted (PubMed:12060778).</text>
</comment>
<comment type="similarity">
    <text evidence="2">Belongs to the UPF0111 family.</text>
</comment>
<reference key="1">
    <citation type="submission" date="1997-11" db="EMBL/GenBank/DDBJ databases">
        <title>Sequence of the Bacillus subtilis genome between xlyA and ykoR.</title>
        <authorList>
            <person name="Devine K.M."/>
        </authorList>
    </citation>
    <scope>NUCLEOTIDE SEQUENCE [GENOMIC DNA]</scope>
    <source>
        <strain>168</strain>
    </source>
</reference>
<reference key="2">
    <citation type="journal article" date="1997" name="Nature">
        <title>The complete genome sequence of the Gram-positive bacterium Bacillus subtilis.</title>
        <authorList>
            <person name="Kunst F."/>
            <person name="Ogasawara N."/>
            <person name="Moszer I."/>
            <person name="Albertini A.M."/>
            <person name="Alloni G."/>
            <person name="Azevedo V."/>
            <person name="Bertero M.G."/>
            <person name="Bessieres P."/>
            <person name="Bolotin A."/>
            <person name="Borchert S."/>
            <person name="Borriss R."/>
            <person name="Boursier L."/>
            <person name="Brans A."/>
            <person name="Braun M."/>
            <person name="Brignell S.C."/>
            <person name="Bron S."/>
            <person name="Brouillet S."/>
            <person name="Bruschi C.V."/>
            <person name="Caldwell B."/>
            <person name="Capuano V."/>
            <person name="Carter N.M."/>
            <person name="Choi S.-K."/>
            <person name="Codani J.-J."/>
            <person name="Connerton I.F."/>
            <person name="Cummings N.J."/>
            <person name="Daniel R.A."/>
            <person name="Denizot F."/>
            <person name="Devine K.M."/>
            <person name="Duesterhoeft A."/>
            <person name="Ehrlich S.D."/>
            <person name="Emmerson P.T."/>
            <person name="Entian K.-D."/>
            <person name="Errington J."/>
            <person name="Fabret C."/>
            <person name="Ferrari E."/>
            <person name="Foulger D."/>
            <person name="Fritz C."/>
            <person name="Fujita M."/>
            <person name="Fujita Y."/>
            <person name="Fuma S."/>
            <person name="Galizzi A."/>
            <person name="Galleron N."/>
            <person name="Ghim S.-Y."/>
            <person name="Glaser P."/>
            <person name="Goffeau A."/>
            <person name="Golightly E.J."/>
            <person name="Grandi G."/>
            <person name="Guiseppi G."/>
            <person name="Guy B.J."/>
            <person name="Haga K."/>
            <person name="Haiech J."/>
            <person name="Harwood C.R."/>
            <person name="Henaut A."/>
            <person name="Hilbert H."/>
            <person name="Holsappel S."/>
            <person name="Hosono S."/>
            <person name="Hullo M.-F."/>
            <person name="Itaya M."/>
            <person name="Jones L.-M."/>
            <person name="Joris B."/>
            <person name="Karamata D."/>
            <person name="Kasahara Y."/>
            <person name="Klaerr-Blanchard M."/>
            <person name="Klein C."/>
            <person name="Kobayashi Y."/>
            <person name="Koetter P."/>
            <person name="Koningstein G."/>
            <person name="Krogh S."/>
            <person name="Kumano M."/>
            <person name="Kurita K."/>
            <person name="Lapidus A."/>
            <person name="Lardinois S."/>
            <person name="Lauber J."/>
            <person name="Lazarevic V."/>
            <person name="Lee S.-M."/>
            <person name="Levine A."/>
            <person name="Liu H."/>
            <person name="Masuda S."/>
            <person name="Mauel C."/>
            <person name="Medigue C."/>
            <person name="Medina N."/>
            <person name="Mellado R.P."/>
            <person name="Mizuno M."/>
            <person name="Moestl D."/>
            <person name="Nakai S."/>
            <person name="Noback M."/>
            <person name="Noone D."/>
            <person name="O'Reilly M."/>
            <person name="Ogawa K."/>
            <person name="Ogiwara A."/>
            <person name="Oudega B."/>
            <person name="Park S.-H."/>
            <person name="Parro V."/>
            <person name="Pohl T.M."/>
            <person name="Portetelle D."/>
            <person name="Porwollik S."/>
            <person name="Prescott A.M."/>
            <person name="Presecan E."/>
            <person name="Pujic P."/>
            <person name="Purnelle B."/>
            <person name="Rapoport G."/>
            <person name="Rey M."/>
            <person name="Reynolds S."/>
            <person name="Rieger M."/>
            <person name="Rivolta C."/>
            <person name="Rocha E."/>
            <person name="Roche B."/>
            <person name="Rose M."/>
            <person name="Sadaie Y."/>
            <person name="Sato T."/>
            <person name="Scanlan E."/>
            <person name="Schleich S."/>
            <person name="Schroeter R."/>
            <person name="Scoffone F."/>
            <person name="Sekiguchi J."/>
            <person name="Sekowska A."/>
            <person name="Seror S.J."/>
            <person name="Serror P."/>
            <person name="Shin B.-S."/>
            <person name="Soldo B."/>
            <person name="Sorokin A."/>
            <person name="Tacconi E."/>
            <person name="Takagi T."/>
            <person name="Takahashi H."/>
            <person name="Takemaru K."/>
            <person name="Takeuchi M."/>
            <person name="Tamakoshi A."/>
            <person name="Tanaka T."/>
            <person name="Terpstra P."/>
            <person name="Tognoni A."/>
            <person name="Tosato V."/>
            <person name="Uchiyama S."/>
            <person name="Vandenbol M."/>
            <person name="Vannier F."/>
            <person name="Vassarotti A."/>
            <person name="Viari A."/>
            <person name="Wambutt R."/>
            <person name="Wedler E."/>
            <person name="Wedler H."/>
            <person name="Weitzenegger T."/>
            <person name="Winters P."/>
            <person name="Wipat A."/>
            <person name="Yamamoto H."/>
            <person name="Yamane K."/>
            <person name="Yasumoto K."/>
            <person name="Yata K."/>
            <person name="Yoshida K."/>
            <person name="Yoshikawa H.-F."/>
            <person name="Zumstein E."/>
            <person name="Yoshikawa H."/>
            <person name="Danchin A."/>
        </authorList>
    </citation>
    <scope>NUCLEOTIDE SEQUENCE [LARGE SCALE GENOMIC DNA]</scope>
    <source>
        <strain>168</strain>
    </source>
</reference>
<reference key="3">
    <citation type="journal article" date="2002" name="Proc. Natl. Acad. Sci. U.S.A.">
        <title>An expanded view of bacterial DNA replication.</title>
        <authorList>
            <person name="Noirot-Gros M.-F."/>
            <person name="Dervyn E."/>
            <person name="Wu L.J."/>
            <person name="Mervelet P."/>
            <person name="Errington J."/>
            <person name="Ehrlich S.D."/>
            <person name="Noirot P."/>
        </authorList>
    </citation>
    <scope>DISRUPTION PHENOTYPE</scope>
    <source>
        <strain>168</strain>
    </source>
</reference>
<gene>
    <name type="primary">ykaA</name>
    <name type="ordered locus">BSU12850</name>
</gene>
<sequence>MIRRKKDKFSLLLTEIAKNIDETAEYFVNFKVTNQTTLKEFADTLKEYETKGDNHVHVMIKELNKAFITPIEREDILQLTNSLDDVLDGIEHFSAMMEIFSITSSDEHIDKFSGYIRECAKEILITIELLAENRLKDIQPHAIKIKEYEHSCDNLHRKSLKNLFGNETDPIKVIQYREIYETLEEIADSCQSVANNLETIIMKNA</sequence>
<accession>O34454</accession>
<protein>
    <recommendedName>
        <fullName>UPF0111 protein YkaA</fullName>
    </recommendedName>
</protein>
<name>YKAA_BACSU</name>
<dbReference type="EMBL" id="AJ002571">
    <property type="protein sequence ID" value="CAA05565.1"/>
    <property type="molecule type" value="Genomic_DNA"/>
</dbReference>
<dbReference type="EMBL" id="AL009126">
    <property type="protein sequence ID" value="CAB13142.1"/>
    <property type="molecule type" value="Genomic_DNA"/>
</dbReference>
<dbReference type="PIR" id="H69854">
    <property type="entry name" value="H69854"/>
</dbReference>
<dbReference type="RefSeq" id="NP_389168.1">
    <property type="nucleotide sequence ID" value="NC_000964.3"/>
</dbReference>
<dbReference type="RefSeq" id="WP_003218470.1">
    <property type="nucleotide sequence ID" value="NZ_OZ025638.1"/>
</dbReference>
<dbReference type="SMR" id="O34454"/>
<dbReference type="FunCoup" id="O34454">
    <property type="interactions" value="201"/>
</dbReference>
<dbReference type="IntAct" id="O34454">
    <property type="interactions" value="2"/>
</dbReference>
<dbReference type="STRING" id="224308.BSU12850"/>
<dbReference type="jPOST" id="O34454"/>
<dbReference type="PaxDb" id="224308-BSU12850"/>
<dbReference type="EnsemblBacteria" id="CAB13142">
    <property type="protein sequence ID" value="CAB13142"/>
    <property type="gene ID" value="BSU_12850"/>
</dbReference>
<dbReference type="GeneID" id="939843"/>
<dbReference type="KEGG" id="bsu:BSU12850"/>
<dbReference type="PATRIC" id="fig|224308.179.peg.1394"/>
<dbReference type="eggNOG" id="COG1392">
    <property type="taxonomic scope" value="Bacteria"/>
</dbReference>
<dbReference type="InParanoid" id="O34454"/>
<dbReference type="OrthoDB" id="9797568at2"/>
<dbReference type="PhylomeDB" id="O34454"/>
<dbReference type="BioCyc" id="BSUB:BSU12850-MONOMER"/>
<dbReference type="Proteomes" id="UP000001570">
    <property type="component" value="Chromosome"/>
</dbReference>
<dbReference type="Gene3D" id="1.20.58.220">
    <property type="entry name" value="Phosphate transport system protein phou homolog 2, domain 2"/>
    <property type="match status" value="1"/>
</dbReference>
<dbReference type="InterPro" id="IPR038078">
    <property type="entry name" value="PhoU-like_sf"/>
</dbReference>
<dbReference type="InterPro" id="IPR018445">
    <property type="entry name" value="Put_Phosphate_transp_reg"/>
</dbReference>
<dbReference type="InterPro" id="IPR052912">
    <property type="entry name" value="UPF0111_domain"/>
</dbReference>
<dbReference type="PANTHER" id="PTHR37298">
    <property type="entry name" value="UPF0111 PROTEIN YKAA"/>
    <property type="match status" value="1"/>
</dbReference>
<dbReference type="PANTHER" id="PTHR37298:SF1">
    <property type="entry name" value="UPF0111 PROTEIN YKAA"/>
    <property type="match status" value="1"/>
</dbReference>
<dbReference type="Pfam" id="PF01865">
    <property type="entry name" value="PhoU_div"/>
    <property type="match status" value="1"/>
</dbReference>
<dbReference type="SUPFAM" id="SSF109755">
    <property type="entry name" value="PhoU-like"/>
    <property type="match status" value="1"/>
</dbReference>
<evidence type="ECO:0000269" key="1">
    <source>
    </source>
</evidence>
<evidence type="ECO:0000305" key="2"/>
<keyword id="KW-1185">Reference proteome</keyword>
<feature type="chain" id="PRO_0000154905" description="UPF0111 protein YkaA">
    <location>
        <begin position="1"/>
        <end position="205"/>
    </location>
</feature>
<proteinExistence type="inferred from homology"/>
<organism>
    <name type="scientific">Bacillus subtilis (strain 168)</name>
    <dbReference type="NCBI Taxonomy" id="224308"/>
    <lineage>
        <taxon>Bacteria</taxon>
        <taxon>Bacillati</taxon>
        <taxon>Bacillota</taxon>
        <taxon>Bacilli</taxon>
        <taxon>Bacillales</taxon>
        <taxon>Bacillaceae</taxon>
        <taxon>Bacillus</taxon>
    </lineage>
</organism>